<sequence>MASSDIQVKELEKRASGQAFELILSPRSKESVPEFPLSPPKKKDLSLEEIQKKLEAAEERRKSHEAEVLKQLAEKREHEKEVLQKAIEENNNFSKMAEEKLTHKMEANKENREAQMAAKLERLREKDKHIEEVRKNKESKDPADETEAD</sequence>
<reference key="1">
    <citation type="submission" date="2005-06" db="EMBL/GenBank/DDBJ databases">
        <title>DNA sequences of macaque genes expressed in brain or testis and its evolutionary implications.</title>
        <authorList>
            <consortium name="International consortium for macaque cDNA sequencing and analysis"/>
        </authorList>
    </citation>
    <scope>NUCLEOTIDE SEQUENCE [LARGE SCALE MRNA]</scope>
    <source>
        <tissue>Testis</tissue>
    </source>
</reference>
<keyword id="KW-0007">Acetylation</keyword>
<keyword id="KW-0175">Coiled coil</keyword>
<keyword id="KW-0963">Cytoplasm</keyword>
<keyword id="KW-0206">Cytoskeleton</keyword>
<keyword id="KW-0217">Developmental protein</keyword>
<keyword id="KW-0221">Differentiation</keyword>
<keyword id="KW-0488">Methylation</keyword>
<keyword id="KW-0493">Microtubule</keyword>
<keyword id="KW-0524">Neurogenesis</keyword>
<keyword id="KW-0597">Phosphoprotein</keyword>
<keyword id="KW-1185">Reference proteome</keyword>
<gene>
    <name type="primary">STMN1</name>
    <name type="ORF">QtsA-16615</name>
</gene>
<evidence type="ECO:0000250" key="1"/>
<evidence type="ECO:0000250" key="2">
    <source>
        <dbReference type="UniProtKB" id="P16949"/>
    </source>
</evidence>
<evidence type="ECO:0000250" key="3">
    <source>
        <dbReference type="UniProtKB" id="P54227"/>
    </source>
</evidence>
<evidence type="ECO:0000255" key="4"/>
<evidence type="ECO:0000255" key="5">
    <source>
        <dbReference type="PROSITE-ProRule" id="PRU00998"/>
    </source>
</evidence>
<evidence type="ECO:0000256" key="6">
    <source>
        <dbReference type="SAM" id="MobiDB-lite"/>
    </source>
</evidence>
<evidence type="ECO:0000305" key="7"/>
<organism>
    <name type="scientific">Macaca fascicularis</name>
    <name type="common">Crab-eating macaque</name>
    <name type="synonym">Cynomolgus monkey</name>
    <dbReference type="NCBI Taxonomy" id="9541"/>
    <lineage>
        <taxon>Eukaryota</taxon>
        <taxon>Metazoa</taxon>
        <taxon>Chordata</taxon>
        <taxon>Craniata</taxon>
        <taxon>Vertebrata</taxon>
        <taxon>Euteleostomi</taxon>
        <taxon>Mammalia</taxon>
        <taxon>Eutheria</taxon>
        <taxon>Euarchontoglires</taxon>
        <taxon>Primates</taxon>
        <taxon>Haplorrhini</taxon>
        <taxon>Catarrhini</taxon>
        <taxon>Cercopithecidae</taxon>
        <taxon>Cercopithecinae</taxon>
        <taxon>Macaca</taxon>
    </lineage>
</organism>
<dbReference type="EMBL" id="AB169018">
    <property type="protein sequence ID" value="BAE01112.1"/>
    <property type="molecule type" value="mRNA"/>
</dbReference>
<dbReference type="RefSeq" id="XP_005544433.2">
    <property type="nucleotide sequence ID" value="XM_005544376.3"/>
</dbReference>
<dbReference type="RefSeq" id="XP_005544434.1">
    <property type="nucleotide sequence ID" value="XM_005544377.2"/>
</dbReference>
<dbReference type="RefSeq" id="XP_015295943.1">
    <property type="nucleotide sequence ID" value="XM_015440457.1"/>
</dbReference>
<dbReference type="RefSeq" id="XP_015295946.1">
    <property type="nucleotide sequence ID" value="XM_015440460.3"/>
</dbReference>
<dbReference type="RefSeq" id="XP_045233520.1">
    <property type="nucleotide sequence ID" value="XM_045377585.2"/>
</dbReference>
<dbReference type="RefSeq" id="XP_045233526.1">
    <property type="nucleotide sequence ID" value="XM_045377591.2"/>
</dbReference>
<dbReference type="RefSeq" id="XP_045233533.1">
    <property type="nucleotide sequence ID" value="XM_045377598.2"/>
</dbReference>
<dbReference type="SMR" id="Q4R712"/>
<dbReference type="STRING" id="9541.ENSMFAP00000041783"/>
<dbReference type="Ensembl" id="ENSMFAT00000016042.2">
    <property type="protein sequence ID" value="ENSMFAP00000041764.2"/>
    <property type="gene ID" value="ENSMFAG00000041588.2"/>
</dbReference>
<dbReference type="GeneID" id="101866525"/>
<dbReference type="KEGG" id="mcf:101866525"/>
<dbReference type="CTD" id="3925"/>
<dbReference type="VEuPathDB" id="HostDB:ENSMFAG00000041588"/>
<dbReference type="eggNOG" id="KOG1280">
    <property type="taxonomic scope" value="Eukaryota"/>
</dbReference>
<dbReference type="GeneTree" id="ENSGT01030000234597"/>
<dbReference type="OMA" id="RKSHEAM"/>
<dbReference type="Proteomes" id="UP000233100">
    <property type="component" value="Chromosome 1"/>
</dbReference>
<dbReference type="Bgee" id="ENSMFAG00000041588">
    <property type="expression patterns" value="Expressed in frontal cortex and 13 other cell types or tissues"/>
</dbReference>
<dbReference type="GO" id="GO:0005737">
    <property type="term" value="C:cytoplasm"/>
    <property type="evidence" value="ECO:0007669"/>
    <property type="project" value="UniProtKB-KW"/>
</dbReference>
<dbReference type="GO" id="GO:0005874">
    <property type="term" value="C:microtubule"/>
    <property type="evidence" value="ECO:0007669"/>
    <property type="project" value="UniProtKB-KW"/>
</dbReference>
<dbReference type="GO" id="GO:0043005">
    <property type="term" value="C:neuron projection"/>
    <property type="evidence" value="ECO:0007669"/>
    <property type="project" value="TreeGrafter"/>
</dbReference>
<dbReference type="GO" id="GO:0015631">
    <property type="term" value="F:tubulin binding"/>
    <property type="evidence" value="ECO:0007669"/>
    <property type="project" value="TreeGrafter"/>
</dbReference>
<dbReference type="GO" id="GO:0007019">
    <property type="term" value="P:microtubule depolymerization"/>
    <property type="evidence" value="ECO:0007669"/>
    <property type="project" value="TreeGrafter"/>
</dbReference>
<dbReference type="GO" id="GO:0031175">
    <property type="term" value="P:neuron projection development"/>
    <property type="evidence" value="ECO:0007669"/>
    <property type="project" value="TreeGrafter"/>
</dbReference>
<dbReference type="GO" id="GO:0031110">
    <property type="term" value="P:regulation of microtubule polymerization or depolymerization"/>
    <property type="evidence" value="ECO:0007669"/>
    <property type="project" value="InterPro"/>
</dbReference>
<dbReference type="Gene3D" id="6.10.280.30">
    <property type="match status" value="1"/>
</dbReference>
<dbReference type="InterPro" id="IPR030514">
    <property type="entry name" value="Stathmin_CS"/>
</dbReference>
<dbReference type="InterPro" id="IPR000956">
    <property type="entry name" value="Stathmin_fam"/>
</dbReference>
<dbReference type="InterPro" id="IPR036002">
    <property type="entry name" value="Stathmin_sf"/>
</dbReference>
<dbReference type="PANTHER" id="PTHR10104">
    <property type="entry name" value="STATHMIN"/>
    <property type="match status" value="1"/>
</dbReference>
<dbReference type="PANTHER" id="PTHR10104:SF5">
    <property type="entry name" value="STATHMIN"/>
    <property type="match status" value="1"/>
</dbReference>
<dbReference type="Pfam" id="PF00836">
    <property type="entry name" value="Stathmin"/>
    <property type="match status" value="1"/>
</dbReference>
<dbReference type="PIRSF" id="PIRSF002285">
    <property type="entry name" value="Stathmin"/>
    <property type="match status" value="1"/>
</dbReference>
<dbReference type="PRINTS" id="PR00345">
    <property type="entry name" value="STATHMIN"/>
</dbReference>
<dbReference type="SUPFAM" id="SSF101494">
    <property type="entry name" value="Stathmin"/>
    <property type="match status" value="1"/>
</dbReference>
<dbReference type="PROSITE" id="PS00563">
    <property type="entry name" value="STATHMIN_1"/>
    <property type="match status" value="1"/>
</dbReference>
<dbReference type="PROSITE" id="PS01041">
    <property type="entry name" value="STATHMIN_2"/>
    <property type="match status" value="1"/>
</dbReference>
<dbReference type="PROSITE" id="PS51663">
    <property type="entry name" value="STATHMIN_3"/>
    <property type="match status" value="1"/>
</dbReference>
<comment type="function">
    <text evidence="1">Involved in the regulation of the microtubule (MT) filament system by destabilizing microtubules. Prevents assembly and promotes disassembly of microtubules. Phosphorylation at Ser-16 may be required for axon formation during neurogenesis. Involved in the control of the learned and innate fear (By similarity).</text>
</comment>
<comment type="subunit">
    <text evidence="1">Binds to two alpha/beta-tubulin heterodimers. Interacts with KIST (By similarity).</text>
</comment>
<comment type="subcellular location">
    <subcellularLocation>
        <location evidence="1">Cytoplasm</location>
        <location evidence="1">Cytoskeleton</location>
    </subcellularLocation>
</comment>
<comment type="PTM">
    <text evidence="1">Many different phosphorylated forms are observed depending on specific combinations among the sites which can be phosphorylated. MAPK is responsible for the phosphorylation of stathmin in response to NGF. Phosphorylation at Ser-16 seems to be required for neuron polarization. Phosphorylation at Ser-63 reduces tubulin binding 10-fold and suppresses the MT polymerization inhibition activity (By similarity).</text>
</comment>
<comment type="similarity">
    <text evidence="7">Belongs to the stathmin family.</text>
</comment>
<feature type="initiator methionine" description="Removed" evidence="2">
    <location>
        <position position="1"/>
    </location>
</feature>
<feature type="chain" id="PRO_0000308265" description="Stathmin">
    <location>
        <begin position="2"/>
        <end position="149"/>
    </location>
</feature>
<feature type="domain" description="SLD" evidence="5">
    <location>
        <begin position="4"/>
        <end position="145"/>
    </location>
</feature>
<feature type="region of interest" description="Disordered" evidence="6">
    <location>
        <begin position="121"/>
        <end position="149"/>
    </location>
</feature>
<feature type="coiled-coil region" evidence="4">
    <location>
        <begin position="41"/>
        <end position="140"/>
    </location>
</feature>
<feature type="compositionally biased region" description="Basic and acidic residues" evidence="6">
    <location>
        <begin position="121"/>
        <end position="143"/>
    </location>
</feature>
<feature type="modified residue" description="N-acetylalanine" evidence="2">
    <location>
        <position position="2"/>
    </location>
</feature>
<feature type="modified residue" description="Phosphoserine" evidence="2">
    <location>
        <position position="4"/>
    </location>
</feature>
<feature type="modified residue" description="N6-acetyllysine" evidence="2">
    <location>
        <position position="9"/>
    </location>
</feature>
<feature type="modified residue" description="Phosphoserine" evidence="3">
    <location>
        <position position="16"/>
    </location>
</feature>
<feature type="modified residue" description="Phosphoserine; by CDK1, MAPK1 and MAPK3" evidence="2">
    <location>
        <position position="25"/>
    </location>
</feature>
<feature type="modified residue" description="N6-methyllysine" evidence="2">
    <location>
        <position position="29"/>
    </location>
</feature>
<feature type="modified residue" description="Phosphoserine" evidence="2">
    <location>
        <position position="31"/>
    </location>
</feature>
<feature type="modified residue" description="Phosphoserine; by CDK1, MAPK1 and MAPK3" evidence="2">
    <location>
        <position position="38"/>
    </location>
</feature>
<feature type="modified residue" description="Phosphoserine; by PKA" evidence="2">
    <location>
        <position position="63"/>
    </location>
</feature>
<feature type="modified residue" description="N6-acetyllysine" evidence="2">
    <location>
        <position position="100"/>
    </location>
</feature>
<feature type="modified residue" description="N6-acetyllysine" evidence="2">
    <location>
        <position position="119"/>
    </location>
</feature>
<name>STMN1_MACFA</name>
<protein>
    <recommendedName>
        <fullName>Stathmin</fullName>
    </recommendedName>
</protein>
<accession>Q4R712</accession>
<proteinExistence type="evidence at transcript level"/>